<sequence length="384" mass="44105">MSEFWVISAPGDKTPQQTYERLQKATMGSGQNLSNCYKFSIPELKVGTLDSLIGLTDDLGKLDTFCEGVCRKVASYMGEVLEDQKDKLSSNLSAGEGTLVNFMHRFQWNMAKYPTKQPIKSLTEILSKVVTQVDTDLRSKSQAYNNLKSSLQNMERKATGSLLLRNLSQIVKKDDFIDGSEYLRTVIVAVPVALFGEWEKNYESLADYVAPKSSRLLTQDEEYGLFATSIFKKVYEEFKYNCSRYKFFVREFNFNEQDSVVRQDQINKIASEKRKMLGPLLRWLKVNFSEVFTAWIHIKALRVFVESVLRYGLPVNFQAVVLDPPKKNRKRLRDVLNNLYCKLDSTGLTNVDAEDSVPGLSLGMQEYYPYVFYKVILDFESRSF</sequence>
<evidence type="ECO:0000250" key="1">
    <source>
        <dbReference type="UniProtKB" id="P21282"/>
    </source>
</evidence>
<evidence type="ECO:0000250" key="2">
    <source>
        <dbReference type="UniProtKB" id="P31412"/>
    </source>
</evidence>
<evidence type="ECO:0000250" key="3">
    <source>
        <dbReference type="UniProtKB" id="Q9XXU9"/>
    </source>
</evidence>
<evidence type="ECO:0000305" key="4"/>
<accession>Q9NDR5</accession>
<organism>
    <name type="scientific">Ascidia sydneiensis samea</name>
    <name type="common">Vanadium-rich ascidian</name>
    <dbReference type="NCBI Taxonomy" id="79730"/>
    <lineage>
        <taxon>Eukaryota</taxon>
        <taxon>Metazoa</taxon>
        <taxon>Chordata</taxon>
        <taxon>Tunicata</taxon>
        <taxon>Ascidiacea</taxon>
        <taxon>Phlebobranchia</taxon>
        <taxon>Ascidiidae</taxon>
        <taxon>Ascidia</taxon>
    </lineage>
</organism>
<comment type="function">
    <text evidence="1 2 3">Subunit of the V1 complex of vacuolar(H+)-ATPase (V-ATPase), a multisubunit enzyme composed of a peripheral complex (V1) that hydrolyzes ATP and a membrane integral complex (V0) that translocates protons (By similarity). V-ATPase is responsible for acidifying and maintaining the pH of intracellular compartments and in some cell types, is targeted to the plasma membrane, where it is responsible for acidifying the extracellular environment (By similarity). Subunit C is necessary for the assembly of the catalytic sector of the enzyme and is likely to have a specific function in its catalytic activity (By similarity).</text>
</comment>
<comment type="subunit">
    <text evidence="1">V-ATPase is a heteromultimeric enzyme made up of two complexes: the ATP-hydrolytic V1 complex and the proton translocation V0 complex (By similarity). The V1 complex consists of three catalytic AB heterodimers that form a heterohexamer, three peripheral stalks each consisting of EG heterodimers, one central rotor including subunits D and F, and the regulatory subunits C and H (By similarity). The proton translocation complex V0 consists of the proton transport subunit a, a ring of proteolipid subunits c9c'', rotary subunit d, subunits e and f, and the accessory subunits vah-19/Ac45 and vah-20/PRR (By similarity).</text>
</comment>
<comment type="similarity">
    <text evidence="4">Belongs to the V-ATPase C subunit family.</text>
</comment>
<reference key="1">
    <citation type="journal article" date="2001" name="Mar. Biotechnol.">
        <title>Subunit C of the vacuolar-type ATPase from the vanadium-rich ascidian Ascidia sydneiensis samea rescued the pH sensitivity of yeast vma5 mutants.</title>
        <authorList>
            <person name="Ueki T."/>
            <person name="Uyama T."/>
            <person name="Kanamori K."/>
            <person name="Michibata H."/>
        </authorList>
    </citation>
    <scope>NUCLEOTIDE SEQUENCE [MRNA]</scope>
</reference>
<gene>
    <name type="primary">VATC</name>
</gene>
<name>VATC_ASCSS</name>
<protein>
    <recommendedName>
        <fullName>V-type proton ATPase subunit C 2</fullName>
        <shortName>V-ATPase subunit C 2</shortName>
    </recommendedName>
    <alternativeName>
        <fullName>Vacuolar proton pump subunit C 2</fullName>
    </alternativeName>
</protein>
<dbReference type="EMBL" id="AB035809">
    <property type="protein sequence ID" value="BAA96746.1"/>
    <property type="molecule type" value="mRNA"/>
</dbReference>
<dbReference type="SMR" id="Q9NDR5"/>
<dbReference type="GO" id="GO:0005765">
    <property type="term" value="C:lysosomal membrane"/>
    <property type="evidence" value="ECO:0007669"/>
    <property type="project" value="TreeGrafter"/>
</dbReference>
<dbReference type="GO" id="GO:0000221">
    <property type="term" value="C:vacuolar proton-transporting V-type ATPase, V1 domain"/>
    <property type="evidence" value="ECO:0007669"/>
    <property type="project" value="TreeGrafter"/>
</dbReference>
<dbReference type="GO" id="GO:0046961">
    <property type="term" value="F:proton-transporting ATPase activity, rotational mechanism"/>
    <property type="evidence" value="ECO:0007669"/>
    <property type="project" value="InterPro"/>
</dbReference>
<dbReference type="CDD" id="cd14785">
    <property type="entry name" value="V-ATPase_C"/>
    <property type="match status" value="1"/>
</dbReference>
<dbReference type="FunFam" id="3.30.70.100:FF:000002">
    <property type="entry name" value="V-type proton ATPase subunit C"/>
    <property type="match status" value="1"/>
</dbReference>
<dbReference type="Gene3D" id="3.30.70.100">
    <property type="match status" value="1"/>
</dbReference>
<dbReference type="Gene3D" id="1.20.1460.10">
    <property type="entry name" value="subunit c (vma5p) of the yeast v-atpase, domain 2"/>
    <property type="match status" value="1"/>
</dbReference>
<dbReference type="Gene3D" id="3.30.70.1180">
    <property type="entry name" value="Vacuolar atp synthase subunit c, domain 1"/>
    <property type="match status" value="1"/>
</dbReference>
<dbReference type="InterPro" id="IPR004907">
    <property type="entry name" value="ATPase_V1-cplx_csu"/>
</dbReference>
<dbReference type="InterPro" id="IPR036132">
    <property type="entry name" value="Vac_ATP_synth_c_sf"/>
</dbReference>
<dbReference type="PANTHER" id="PTHR10137">
    <property type="entry name" value="V-TYPE PROTON ATPASE SUBUNIT C"/>
    <property type="match status" value="1"/>
</dbReference>
<dbReference type="PANTHER" id="PTHR10137:SF0">
    <property type="entry name" value="V-TYPE PROTON ATPASE SUBUNIT C"/>
    <property type="match status" value="1"/>
</dbReference>
<dbReference type="Pfam" id="PF03223">
    <property type="entry name" value="V-ATPase_C"/>
    <property type="match status" value="1"/>
</dbReference>
<dbReference type="SUPFAM" id="SSF118203">
    <property type="entry name" value="Vacuolar ATP synthase subunit C"/>
    <property type="match status" value="1"/>
</dbReference>
<proteinExistence type="evidence at transcript level"/>
<feature type="chain" id="PRO_0000209350" description="V-type proton ATPase subunit C 2">
    <location>
        <begin position="1"/>
        <end position="384"/>
    </location>
</feature>
<keyword id="KW-0375">Hydrogen ion transport</keyword>
<keyword id="KW-0406">Ion transport</keyword>
<keyword id="KW-0813">Transport</keyword>